<dbReference type="EC" id="1.4.4.2" evidence="1"/>
<dbReference type="EMBL" id="AE008918">
    <property type="protein sequence ID" value="AAL53803.1"/>
    <property type="molecule type" value="Genomic_DNA"/>
</dbReference>
<dbReference type="PIR" id="AH3579">
    <property type="entry name" value="AH3579"/>
</dbReference>
<dbReference type="RefSeq" id="WP_004682032.1">
    <property type="nucleotide sequence ID" value="NC_003318.1"/>
</dbReference>
<dbReference type="SMR" id="P62921"/>
<dbReference type="GeneID" id="29595431"/>
<dbReference type="KEGG" id="bme:BMEII0561"/>
<dbReference type="KEGG" id="bmel:DK63_2685"/>
<dbReference type="PATRIC" id="fig|224914.52.peg.2813"/>
<dbReference type="eggNOG" id="COG0403">
    <property type="taxonomic scope" value="Bacteria"/>
</dbReference>
<dbReference type="eggNOG" id="COG1003">
    <property type="taxonomic scope" value="Bacteria"/>
</dbReference>
<dbReference type="PhylomeDB" id="P62921"/>
<dbReference type="Proteomes" id="UP000000419">
    <property type="component" value="Chromosome II"/>
</dbReference>
<dbReference type="GO" id="GO:0005829">
    <property type="term" value="C:cytosol"/>
    <property type="evidence" value="ECO:0007669"/>
    <property type="project" value="TreeGrafter"/>
</dbReference>
<dbReference type="GO" id="GO:0005960">
    <property type="term" value="C:glycine cleavage complex"/>
    <property type="evidence" value="ECO:0007669"/>
    <property type="project" value="TreeGrafter"/>
</dbReference>
<dbReference type="GO" id="GO:0016594">
    <property type="term" value="F:glycine binding"/>
    <property type="evidence" value="ECO:0007669"/>
    <property type="project" value="TreeGrafter"/>
</dbReference>
<dbReference type="GO" id="GO:0004375">
    <property type="term" value="F:glycine dehydrogenase (decarboxylating) activity"/>
    <property type="evidence" value="ECO:0007669"/>
    <property type="project" value="UniProtKB-EC"/>
</dbReference>
<dbReference type="GO" id="GO:0030170">
    <property type="term" value="F:pyridoxal phosphate binding"/>
    <property type="evidence" value="ECO:0007669"/>
    <property type="project" value="TreeGrafter"/>
</dbReference>
<dbReference type="GO" id="GO:0019464">
    <property type="term" value="P:glycine decarboxylation via glycine cleavage system"/>
    <property type="evidence" value="ECO:0007669"/>
    <property type="project" value="UniProtKB-UniRule"/>
</dbReference>
<dbReference type="CDD" id="cd00613">
    <property type="entry name" value="GDC-P"/>
    <property type="match status" value="2"/>
</dbReference>
<dbReference type="FunFam" id="3.90.1150.10:FF:000007">
    <property type="entry name" value="Glycine dehydrogenase (decarboxylating), mitochondrial"/>
    <property type="match status" value="1"/>
</dbReference>
<dbReference type="FunFam" id="3.40.640.10:FF:000007">
    <property type="entry name" value="glycine dehydrogenase (Decarboxylating), mitochondrial"/>
    <property type="match status" value="1"/>
</dbReference>
<dbReference type="Gene3D" id="3.90.1150.10">
    <property type="entry name" value="Aspartate Aminotransferase, domain 1"/>
    <property type="match status" value="2"/>
</dbReference>
<dbReference type="Gene3D" id="3.40.640.10">
    <property type="entry name" value="Type I PLP-dependent aspartate aminotransferase-like (Major domain)"/>
    <property type="match status" value="2"/>
</dbReference>
<dbReference type="HAMAP" id="MF_00711">
    <property type="entry name" value="GcvP"/>
    <property type="match status" value="1"/>
</dbReference>
<dbReference type="InterPro" id="IPR003437">
    <property type="entry name" value="GcvP"/>
</dbReference>
<dbReference type="InterPro" id="IPR049316">
    <property type="entry name" value="GDC-P_C"/>
</dbReference>
<dbReference type="InterPro" id="IPR049315">
    <property type="entry name" value="GDC-P_N"/>
</dbReference>
<dbReference type="InterPro" id="IPR020581">
    <property type="entry name" value="GDC_P"/>
</dbReference>
<dbReference type="InterPro" id="IPR015424">
    <property type="entry name" value="PyrdxlP-dep_Trfase"/>
</dbReference>
<dbReference type="InterPro" id="IPR015421">
    <property type="entry name" value="PyrdxlP-dep_Trfase_major"/>
</dbReference>
<dbReference type="InterPro" id="IPR015422">
    <property type="entry name" value="PyrdxlP-dep_Trfase_small"/>
</dbReference>
<dbReference type="NCBIfam" id="TIGR00461">
    <property type="entry name" value="gcvP"/>
    <property type="match status" value="1"/>
</dbReference>
<dbReference type="NCBIfam" id="NF003346">
    <property type="entry name" value="PRK04366.1"/>
    <property type="match status" value="1"/>
</dbReference>
<dbReference type="PANTHER" id="PTHR11773:SF1">
    <property type="entry name" value="GLYCINE DEHYDROGENASE (DECARBOXYLATING), MITOCHONDRIAL"/>
    <property type="match status" value="1"/>
</dbReference>
<dbReference type="PANTHER" id="PTHR11773">
    <property type="entry name" value="GLYCINE DEHYDROGENASE, DECARBOXYLATING"/>
    <property type="match status" value="1"/>
</dbReference>
<dbReference type="Pfam" id="PF21478">
    <property type="entry name" value="GcvP2_C"/>
    <property type="match status" value="1"/>
</dbReference>
<dbReference type="Pfam" id="PF02347">
    <property type="entry name" value="GDC-P"/>
    <property type="match status" value="2"/>
</dbReference>
<dbReference type="SUPFAM" id="SSF53383">
    <property type="entry name" value="PLP-dependent transferases"/>
    <property type="match status" value="2"/>
</dbReference>
<accession>P62921</accession>
<accession>Q93MS6</accession>
<sequence>MTEFLPFVARHIGPRHEDERAMLAALGLPSMETLITQAVPASIRLNRALNLPAALSEADALAELGTIMGRNVVKKSFIGAGYHGVHTPPVIQRNLFENPAWYTAYTPYQSEISQGRLELLFHFQTLVAELTGLPVACASLLDEATAVAEAIGVACRHHRDKRSRILLAGELHPQTVDVVNTRAEPLGWEIATGSDVDDNTAAIVVPWPDTRGVYGDFAKVIADAKAKGALVIAVADPLALTIMEAPARWGADMAVGSMQRYGVPMGFGGPHAAYLAVSEALTRIIPGRIVGQSVDAHGRAAYRLALQTREQHIRRDKATSNICTAQALLANMAAAFAIWHGPAGLQAIATRVAALAARFAAALKAAGVEIAGESLFDTVTAKVPGKAAAIAAEADKGGRLIRIIDADTVGVTFDETSTEEDLTALASLFGAKLVGGDTVLVPGKERGEGFLTQEVFHSHRSETEMMRFLRRLADKDLALDRAMIPLGSCTMKLNAAAEMMPVSWNTVANLHPFAPAEQVQGYAKMTSDLEAWLCEITGFAGVSLQPNAGSQGEYAGLMAIRHYHQARGQGHRNICLIPSSAHGTNPASASMAGMSVVVVNCRPDGDIDIDDLKAKAEKHRDNLAAFMITYPSTYGVFEEGIKAFCEIVHDNGGQVYFDGANLNALVGLARPADIGADVCHMNLHKTFCIPHGGGGPGVGPIGVAKHLVPYLPGHVEAGSEHAVAAAQFGSASILVITWMYIRMMGGAGLKKATEAAILNANYIAHRLKGVYPILYTGAHDRVAHECIVDTRVLKDSAGITVEDVAKRLIDYGFHAPTMSWPVAGTLMIEPTESEPKLEIDRLCDAMIAIAGEAKKVADGVWPADDNPLANAPHTASDTLATEWKHPYTREEAVFPGGAFDPTAKYWPPVSRVDNVGGDRNLICSCPPVAAYG</sequence>
<proteinExistence type="inferred from homology"/>
<evidence type="ECO:0000255" key="1">
    <source>
        <dbReference type="HAMAP-Rule" id="MF_00711"/>
    </source>
</evidence>
<organism>
    <name type="scientific">Brucella melitensis biotype 1 (strain ATCC 23456 / CCUG 17765 / NCTC 10094 / 16M)</name>
    <dbReference type="NCBI Taxonomy" id="224914"/>
    <lineage>
        <taxon>Bacteria</taxon>
        <taxon>Pseudomonadati</taxon>
        <taxon>Pseudomonadota</taxon>
        <taxon>Alphaproteobacteria</taxon>
        <taxon>Hyphomicrobiales</taxon>
        <taxon>Brucellaceae</taxon>
        <taxon>Brucella/Ochrobactrum group</taxon>
        <taxon>Brucella</taxon>
    </lineage>
</organism>
<protein>
    <recommendedName>
        <fullName evidence="1">Glycine dehydrogenase (decarboxylating)</fullName>
        <ecNumber evidence="1">1.4.4.2</ecNumber>
    </recommendedName>
    <alternativeName>
        <fullName evidence="1">Glycine cleavage system P-protein</fullName>
    </alternativeName>
    <alternativeName>
        <fullName evidence="1">Glycine decarboxylase</fullName>
    </alternativeName>
    <alternativeName>
        <fullName evidence="1">Glycine dehydrogenase (aminomethyl-transferring)</fullName>
    </alternativeName>
</protein>
<name>GCSP_BRUME</name>
<comment type="function">
    <text evidence="1">The glycine cleavage system catalyzes the degradation of glycine. The P protein binds the alpha-amino group of glycine through its pyridoxal phosphate cofactor; CO(2) is released and the remaining methylamine moiety is then transferred to the lipoamide cofactor of the H protein.</text>
</comment>
<comment type="catalytic activity">
    <reaction evidence="1">
        <text>N(6)-[(R)-lipoyl]-L-lysyl-[glycine-cleavage complex H protein] + glycine + H(+) = N(6)-[(R)-S(8)-aminomethyldihydrolipoyl]-L-lysyl-[glycine-cleavage complex H protein] + CO2</text>
        <dbReference type="Rhea" id="RHEA:24304"/>
        <dbReference type="Rhea" id="RHEA-COMP:10494"/>
        <dbReference type="Rhea" id="RHEA-COMP:10495"/>
        <dbReference type="ChEBI" id="CHEBI:15378"/>
        <dbReference type="ChEBI" id="CHEBI:16526"/>
        <dbReference type="ChEBI" id="CHEBI:57305"/>
        <dbReference type="ChEBI" id="CHEBI:83099"/>
        <dbReference type="ChEBI" id="CHEBI:83143"/>
        <dbReference type="EC" id="1.4.4.2"/>
    </reaction>
</comment>
<comment type="cofactor">
    <cofactor evidence="1">
        <name>pyridoxal 5'-phosphate</name>
        <dbReference type="ChEBI" id="CHEBI:597326"/>
    </cofactor>
</comment>
<comment type="subunit">
    <text evidence="1">The glycine cleavage system is composed of four proteins: P, T, L and H.</text>
</comment>
<comment type="similarity">
    <text evidence="1">Belongs to the GcvP family.</text>
</comment>
<feature type="chain" id="PRO_0000166909" description="Glycine dehydrogenase (decarboxylating)">
    <location>
        <begin position="1"/>
        <end position="932"/>
    </location>
</feature>
<feature type="modified residue" description="N6-(pyridoxal phosphate)lysine" evidence="1">
    <location>
        <position position="685"/>
    </location>
</feature>
<gene>
    <name evidence="1" type="primary">gcvP</name>
    <name type="ordered locus">BMEII0561</name>
</gene>
<reference key="1">
    <citation type="journal article" date="2002" name="Proc. Natl. Acad. Sci. U.S.A.">
        <title>The genome sequence of the facultative intracellular pathogen Brucella melitensis.</title>
        <authorList>
            <person name="DelVecchio V.G."/>
            <person name="Kapatral V."/>
            <person name="Redkar R.J."/>
            <person name="Patra G."/>
            <person name="Mujer C."/>
            <person name="Los T."/>
            <person name="Ivanova N."/>
            <person name="Anderson I."/>
            <person name="Bhattacharyya A."/>
            <person name="Lykidis A."/>
            <person name="Reznik G."/>
            <person name="Jablonski L."/>
            <person name="Larsen N."/>
            <person name="D'Souza M."/>
            <person name="Bernal A."/>
            <person name="Mazur M."/>
            <person name="Goltsman E."/>
            <person name="Selkov E."/>
            <person name="Elzer P.H."/>
            <person name="Hagius S."/>
            <person name="O'Callaghan D."/>
            <person name="Letesson J.-J."/>
            <person name="Haselkorn R."/>
            <person name="Kyrpides N.C."/>
            <person name="Overbeek R."/>
        </authorList>
    </citation>
    <scope>NUCLEOTIDE SEQUENCE [LARGE SCALE GENOMIC DNA]</scope>
    <source>
        <strain>ATCC 23456 / CCUG 17765 / NCTC 10094 / 16M</strain>
    </source>
</reference>
<keyword id="KW-0560">Oxidoreductase</keyword>
<keyword id="KW-0663">Pyridoxal phosphate</keyword>